<name>ILVD_ACIBS</name>
<organism>
    <name type="scientific">Acinetobacter baumannii (strain SDF)</name>
    <dbReference type="NCBI Taxonomy" id="509170"/>
    <lineage>
        <taxon>Bacteria</taxon>
        <taxon>Pseudomonadati</taxon>
        <taxon>Pseudomonadota</taxon>
        <taxon>Gammaproteobacteria</taxon>
        <taxon>Moraxellales</taxon>
        <taxon>Moraxellaceae</taxon>
        <taxon>Acinetobacter</taxon>
        <taxon>Acinetobacter calcoaceticus/baumannii complex</taxon>
    </lineage>
</organism>
<sequence length="609" mass="65313">MPDYRSKTSTHGRNMAGARGLWRATGMKDEDFGKPIIAVVNSFTQFVPGHVHLKDLGQLVAAEIQAAGGVAKEFNTIAVDDGIAMGHDGMLYSLPSRDLIADSVEYMVNAHCADAMVCISNCDKITPGMLMAAMRLNIPVVFVSGGPMEAGKVKFRGDEKAIDLVDAMVVAADDSYTDEEVAEFERSACPTCGSCSGMFTANSMNCLTEALGLSLPGNGSIVATHANRKKLFLKAGQLIVELAKRYYEQNDASILPRSIATKAAFKNAMTLDIAMGGSTNTVLHLLAAANEAEVDFTMDDIDELSRRVPVLSKVAPAKQDVHMEDVHRAGGIMAILGELDRANLLDVSVPTVHEKTLKDALDKWDIIRTEDPDVYEFYRSSPGGVPTQVAFSQNRYYSTLDGDREKGVIRNAEHAFSKDGGLAVLYGNIALDGCIVKTAGVDESILKFTGSARVFESQDAAVEAILGNEIKAGDVVVIRYEGPRGGPGMQEMLYPTSYLKSKGLGKDCALVTDGRFSGGSSGLSIGHVSPEAAEGGAIGLVEDGDTIEIDIPNRTIHLNIDDATLAHRRTVQEAKGWHPKEERKRKVSKALKVYAMHTTSAAKGAVRVL</sequence>
<keyword id="KW-0001">2Fe-2S</keyword>
<keyword id="KW-0028">Amino-acid biosynthesis</keyword>
<keyword id="KW-0100">Branched-chain amino acid biosynthesis</keyword>
<keyword id="KW-0408">Iron</keyword>
<keyword id="KW-0411">Iron-sulfur</keyword>
<keyword id="KW-0456">Lyase</keyword>
<keyword id="KW-0460">Magnesium</keyword>
<keyword id="KW-0479">Metal-binding</keyword>
<protein>
    <recommendedName>
        <fullName evidence="1">Dihydroxy-acid dehydratase</fullName>
        <shortName evidence="1">DAD</shortName>
        <ecNumber evidence="1">4.2.1.9</ecNumber>
    </recommendedName>
</protein>
<feature type="chain" id="PRO_1000089360" description="Dihydroxy-acid dehydratase">
    <location>
        <begin position="1"/>
        <end position="609"/>
    </location>
</feature>
<feature type="active site" description="Proton acceptor" evidence="1">
    <location>
        <position position="517"/>
    </location>
</feature>
<feature type="binding site" evidence="1">
    <location>
        <position position="81"/>
    </location>
    <ligand>
        <name>Mg(2+)</name>
        <dbReference type="ChEBI" id="CHEBI:18420"/>
    </ligand>
</feature>
<feature type="binding site" evidence="1">
    <location>
        <position position="122"/>
    </location>
    <ligand>
        <name>[2Fe-2S] cluster</name>
        <dbReference type="ChEBI" id="CHEBI:190135"/>
    </ligand>
</feature>
<feature type="binding site" evidence="1">
    <location>
        <position position="123"/>
    </location>
    <ligand>
        <name>Mg(2+)</name>
        <dbReference type="ChEBI" id="CHEBI:18420"/>
    </ligand>
</feature>
<feature type="binding site" description="via carbamate group" evidence="1">
    <location>
        <position position="124"/>
    </location>
    <ligand>
        <name>Mg(2+)</name>
        <dbReference type="ChEBI" id="CHEBI:18420"/>
    </ligand>
</feature>
<feature type="binding site" evidence="1">
    <location>
        <position position="195"/>
    </location>
    <ligand>
        <name>[2Fe-2S] cluster</name>
        <dbReference type="ChEBI" id="CHEBI:190135"/>
    </ligand>
</feature>
<feature type="binding site" evidence="1">
    <location>
        <position position="491"/>
    </location>
    <ligand>
        <name>Mg(2+)</name>
        <dbReference type="ChEBI" id="CHEBI:18420"/>
    </ligand>
</feature>
<feature type="modified residue" description="N6-carboxylysine" evidence="1">
    <location>
        <position position="124"/>
    </location>
</feature>
<comment type="function">
    <text evidence="1">Functions in the biosynthesis of branched-chain amino acids. Catalyzes the dehydration of (2R,3R)-2,3-dihydroxy-3-methylpentanoate (2,3-dihydroxy-3-methylvalerate) into 2-oxo-3-methylpentanoate (2-oxo-3-methylvalerate) and of (2R)-2,3-dihydroxy-3-methylbutanoate (2,3-dihydroxyisovalerate) into 2-oxo-3-methylbutanoate (2-oxoisovalerate), the penultimate precursor to L-isoleucine and L-valine, respectively.</text>
</comment>
<comment type="catalytic activity">
    <reaction evidence="1">
        <text>(2R)-2,3-dihydroxy-3-methylbutanoate = 3-methyl-2-oxobutanoate + H2O</text>
        <dbReference type="Rhea" id="RHEA:24809"/>
        <dbReference type="ChEBI" id="CHEBI:11851"/>
        <dbReference type="ChEBI" id="CHEBI:15377"/>
        <dbReference type="ChEBI" id="CHEBI:49072"/>
        <dbReference type="EC" id="4.2.1.9"/>
    </reaction>
    <physiologicalReaction direction="left-to-right" evidence="1">
        <dbReference type="Rhea" id="RHEA:24810"/>
    </physiologicalReaction>
</comment>
<comment type="catalytic activity">
    <reaction evidence="1">
        <text>(2R,3R)-2,3-dihydroxy-3-methylpentanoate = (S)-3-methyl-2-oxopentanoate + H2O</text>
        <dbReference type="Rhea" id="RHEA:27694"/>
        <dbReference type="ChEBI" id="CHEBI:15377"/>
        <dbReference type="ChEBI" id="CHEBI:35146"/>
        <dbReference type="ChEBI" id="CHEBI:49258"/>
        <dbReference type="EC" id="4.2.1.9"/>
    </reaction>
    <physiologicalReaction direction="left-to-right" evidence="1">
        <dbReference type="Rhea" id="RHEA:27695"/>
    </physiologicalReaction>
</comment>
<comment type="cofactor">
    <cofactor evidence="1">
        <name>[2Fe-2S] cluster</name>
        <dbReference type="ChEBI" id="CHEBI:190135"/>
    </cofactor>
    <text evidence="1">Binds 1 [2Fe-2S] cluster per subunit. This cluster acts as a Lewis acid cofactor.</text>
</comment>
<comment type="cofactor">
    <cofactor evidence="1">
        <name>Mg(2+)</name>
        <dbReference type="ChEBI" id="CHEBI:18420"/>
    </cofactor>
</comment>
<comment type="pathway">
    <text evidence="1">Amino-acid biosynthesis; L-isoleucine biosynthesis; L-isoleucine from 2-oxobutanoate: step 3/4.</text>
</comment>
<comment type="pathway">
    <text evidence="1">Amino-acid biosynthesis; L-valine biosynthesis; L-valine from pyruvate: step 3/4.</text>
</comment>
<comment type="subunit">
    <text evidence="1">Homodimer.</text>
</comment>
<comment type="similarity">
    <text evidence="1">Belongs to the IlvD/Edd family.</text>
</comment>
<gene>
    <name evidence="1" type="primary">ilvD</name>
    <name type="ordered locus">ABSDF3647</name>
</gene>
<dbReference type="EC" id="4.2.1.9" evidence="1"/>
<dbReference type="EMBL" id="CU468230">
    <property type="protein sequence ID" value="CAP02902.1"/>
    <property type="molecule type" value="Genomic_DNA"/>
</dbReference>
<dbReference type="SMR" id="B0VQ11"/>
<dbReference type="KEGG" id="abm:ABSDF3647"/>
<dbReference type="HOGENOM" id="CLU_014271_4_2_6"/>
<dbReference type="UniPathway" id="UPA00047">
    <property type="reaction ID" value="UER00057"/>
</dbReference>
<dbReference type="UniPathway" id="UPA00049">
    <property type="reaction ID" value="UER00061"/>
</dbReference>
<dbReference type="Proteomes" id="UP000001741">
    <property type="component" value="Chromosome"/>
</dbReference>
<dbReference type="GO" id="GO:0005829">
    <property type="term" value="C:cytosol"/>
    <property type="evidence" value="ECO:0007669"/>
    <property type="project" value="TreeGrafter"/>
</dbReference>
<dbReference type="GO" id="GO:0051537">
    <property type="term" value="F:2 iron, 2 sulfur cluster binding"/>
    <property type="evidence" value="ECO:0007669"/>
    <property type="project" value="UniProtKB-UniRule"/>
</dbReference>
<dbReference type="GO" id="GO:0004160">
    <property type="term" value="F:dihydroxy-acid dehydratase activity"/>
    <property type="evidence" value="ECO:0007669"/>
    <property type="project" value="UniProtKB-UniRule"/>
</dbReference>
<dbReference type="GO" id="GO:0000287">
    <property type="term" value="F:magnesium ion binding"/>
    <property type="evidence" value="ECO:0007669"/>
    <property type="project" value="UniProtKB-UniRule"/>
</dbReference>
<dbReference type="GO" id="GO:0009097">
    <property type="term" value="P:isoleucine biosynthetic process"/>
    <property type="evidence" value="ECO:0007669"/>
    <property type="project" value="UniProtKB-UniRule"/>
</dbReference>
<dbReference type="GO" id="GO:0009099">
    <property type="term" value="P:L-valine biosynthetic process"/>
    <property type="evidence" value="ECO:0007669"/>
    <property type="project" value="UniProtKB-UniRule"/>
</dbReference>
<dbReference type="FunFam" id="3.50.30.80:FF:000001">
    <property type="entry name" value="Dihydroxy-acid dehydratase"/>
    <property type="match status" value="1"/>
</dbReference>
<dbReference type="Gene3D" id="3.50.30.80">
    <property type="entry name" value="IlvD/EDD C-terminal domain-like"/>
    <property type="match status" value="1"/>
</dbReference>
<dbReference type="HAMAP" id="MF_00012">
    <property type="entry name" value="IlvD"/>
    <property type="match status" value="1"/>
</dbReference>
<dbReference type="InterPro" id="IPR042096">
    <property type="entry name" value="Dihydro-acid_dehy_C"/>
</dbReference>
<dbReference type="InterPro" id="IPR004404">
    <property type="entry name" value="DihydroxyA_deHydtase"/>
</dbReference>
<dbReference type="InterPro" id="IPR020558">
    <property type="entry name" value="DiOHA_6PGluconate_deHydtase_CS"/>
</dbReference>
<dbReference type="InterPro" id="IPR056740">
    <property type="entry name" value="ILV_EDD_C"/>
</dbReference>
<dbReference type="InterPro" id="IPR000581">
    <property type="entry name" value="ILV_EDD_N"/>
</dbReference>
<dbReference type="InterPro" id="IPR037237">
    <property type="entry name" value="IlvD/EDD_N"/>
</dbReference>
<dbReference type="NCBIfam" id="TIGR00110">
    <property type="entry name" value="ilvD"/>
    <property type="match status" value="1"/>
</dbReference>
<dbReference type="NCBIfam" id="NF009103">
    <property type="entry name" value="PRK12448.1"/>
    <property type="match status" value="1"/>
</dbReference>
<dbReference type="PANTHER" id="PTHR43661">
    <property type="entry name" value="D-XYLONATE DEHYDRATASE"/>
    <property type="match status" value="1"/>
</dbReference>
<dbReference type="PANTHER" id="PTHR43661:SF3">
    <property type="entry name" value="D-XYLONATE DEHYDRATASE YAGF-RELATED"/>
    <property type="match status" value="1"/>
</dbReference>
<dbReference type="Pfam" id="PF24877">
    <property type="entry name" value="ILV_EDD_C"/>
    <property type="match status" value="1"/>
</dbReference>
<dbReference type="Pfam" id="PF00920">
    <property type="entry name" value="ILVD_EDD_N"/>
    <property type="match status" value="1"/>
</dbReference>
<dbReference type="SUPFAM" id="SSF143975">
    <property type="entry name" value="IlvD/EDD N-terminal domain-like"/>
    <property type="match status" value="1"/>
</dbReference>
<dbReference type="SUPFAM" id="SSF52016">
    <property type="entry name" value="LeuD/IlvD-like"/>
    <property type="match status" value="1"/>
</dbReference>
<dbReference type="PROSITE" id="PS00886">
    <property type="entry name" value="ILVD_EDD_1"/>
    <property type="match status" value="1"/>
</dbReference>
<dbReference type="PROSITE" id="PS00887">
    <property type="entry name" value="ILVD_EDD_2"/>
    <property type="match status" value="1"/>
</dbReference>
<reference key="1">
    <citation type="journal article" date="2008" name="PLoS ONE">
        <title>Comparative analysis of Acinetobacters: three genomes for three lifestyles.</title>
        <authorList>
            <person name="Vallenet D."/>
            <person name="Nordmann P."/>
            <person name="Barbe V."/>
            <person name="Poirel L."/>
            <person name="Mangenot S."/>
            <person name="Bataille E."/>
            <person name="Dossat C."/>
            <person name="Gas S."/>
            <person name="Kreimeyer A."/>
            <person name="Lenoble P."/>
            <person name="Oztas S."/>
            <person name="Poulain J."/>
            <person name="Segurens B."/>
            <person name="Robert C."/>
            <person name="Abergel C."/>
            <person name="Claverie J.-M."/>
            <person name="Raoult D."/>
            <person name="Medigue C."/>
            <person name="Weissenbach J."/>
            <person name="Cruveiller S."/>
        </authorList>
    </citation>
    <scope>NUCLEOTIDE SEQUENCE [LARGE SCALE GENOMIC DNA]</scope>
    <source>
        <strain>SDF</strain>
    </source>
</reference>
<proteinExistence type="inferred from homology"/>
<accession>B0VQ11</accession>
<evidence type="ECO:0000255" key="1">
    <source>
        <dbReference type="HAMAP-Rule" id="MF_00012"/>
    </source>
</evidence>